<protein>
    <recommendedName>
        <fullName evidence="1">Chaperonin GroEL 2</fullName>
        <ecNumber evidence="1">5.6.1.7</ecNumber>
    </recommendedName>
    <alternativeName>
        <fullName evidence="1">60 kDa chaperonin 2</fullName>
    </alternativeName>
    <alternativeName>
        <fullName evidence="1">Chaperonin-60 2</fullName>
        <shortName evidence="1">Cpn60 2</shortName>
    </alternativeName>
</protein>
<organism>
    <name type="scientific">Acidothermus cellulolyticus (strain ATCC 43068 / DSM 8971 / 11B)</name>
    <dbReference type="NCBI Taxonomy" id="351607"/>
    <lineage>
        <taxon>Bacteria</taxon>
        <taxon>Bacillati</taxon>
        <taxon>Actinomycetota</taxon>
        <taxon>Actinomycetes</taxon>
        <taxon>Acidothermales</taxon>
        <taxon>Acidothermaceae</taxon>
        <taxon>Acidothermus</taxon>
    </lineage>
</organism>
<comment type="function">
    <text evidence="1">Together with its co-chaperonin GroES, plays an essential role in assisting protein folding. The GroEL-GroES system forms a nano-cage that allows encapsulation of the non-native substrate proteins and provides a physical environment optimized to promote and accelerate protein folding.</text>
</comment>
<comment type="catalytic activity">
    <reaction evidence="1">
        <text>ATP + H2O + a folded polypeptide = ADP + phosphate + an unfolded polypeptide.</text>
        <dbReference type="EC" id="5.6.1.7"/>
    </reaction>
</comment>
<comment type="subunit">
    <text evidence="1">Forms a cylinder of 14 subunits composed of two heptameric rings stacked back-to-back. Interacts with the co-chaperonin GroES.</text>
</comment>
<comment type="subcellular location">
    <subcellularLocation>
        <location evidence="1">Cytoplasm</location>
    </subcellularLocation>
</comment>
<comment type="similarity">
    <text evidence="1">Belongs to the chaperonin (HSP60) family.</text>
</comment>
<keyword id="KW-0067">ATP-binding</keyword>
<keyword id="KW-0143">Chaperone</keyword>
<keyword id="KW-0963">Cytoplasm</keyword>
<keyword id="KW-0413">Isomerase</keyword>
<keyword id="KW-0547">Nucleotide-binding</keyword>
<keyword id="KW-1185">Reference proteome</keyword>
<dbReference type="EC" id="5.6.1.7" evidence="1"/>
<dbReference type="EMBL" id="CP000481">
    <property type="protein sequence ID" value="ABK52137.1"/>
    <property type="molecule type" value="Genomic_DNA"/>
</dbReference>
<dbReference type="RefSeq" id="WP_011719200.1">
    <property type="nucleotide sequence ID" value="NC_008578.1"/>
</dbReference>
<dbReference type="SMR" id="A0LRS7"/>
<dbReference type="STRING" id="351607.Acel_0363"/>
<dbReference type="KEGG" id="ace:Acel_0363"/>
<dbReference type="eggNOG" id="COG0459">
    <property type="taxonomic scope" value="Bacteria"/>
</dbReference>
<dbReference type="HOGENOM" id="CLU_016503_3_0_11"/>
<dbReference type="InParanoid" id="A0LRS7"/>
<dbReference type="OrthoDB" id="9766614at2"/>
<dbReference type="Proteomes" id="UP000008221">
    <property type="component" value="Chromosome"/>
</dbReference>
<dbReference type="GO" id="GO:0005737">
    <property type="term" value="C:cytoplasm"/>
    <property type="evidence" value="ECO:0007669"/>
    <property type="project" value="UniProtKB-SubCell"/>
</dbReference>
<dbReference type="GO" id="GO:0005524">
    <property type="term" value="F:ATP binding"/>
    <property type="evidence" value="ECO:0007669"/>
    <property type="project" value="UniProtKB-UniRule"/>
</dbReference>
<dbReference type="GO" id="GO:0140662">
    <property type="term" value="F:ATP-dependent protein folding chaperone"/>
    <property type="evidence" value="ECO:0007669"/>
    <property type="project" value="InterPro"/>
</dbReference>
<dbReference type="GO" id="GO:0016853">
    <property type="term" value="F:isomerase activity"/>
    <property type="evidence" value="ECO:0007669"/>
    <property type="project" value="UniProtKB-KW"/>
</dbReference>
<dbReference type="GO" id="GO:0051082">
    <property type="term" value="F:unfolded protein binding"/>
    <property type="evidence" value="ECO:0007669"/>
    <property type="project" value="UniProtKB-UniRule"/>
</dbReference>
<dbReference type="GO" id="GO:0042026">
    <property type="term" value="P:protein refolding"/>
    <property type="evidence" value="ECO:0007669"/>
    <property type="project" value="UniProtKB-UniRule"/>
</dbReference>
<dbReference type="CDD" id="cd03344">
    <property type="entry name" value="GroEL"/>
    <property type="match status" value="1"/>
</dbReference>
<dbReference type="FunFam" id="3.50.7.10:FF:000001">
    <property type="entry name" value="60 kDa chaperonin"/>
    <property type="match status" value="1"/>
</dbReference>
<dbReference type="Gene3D" id="3.50.7.10">
    <property type="entry name" value="GroEL"/>
    <property type="match status" value="1"/>
</dbReference>
<dbReference type="Gene3D" id="1.10.560.10">
    <property type="entry name" value="GroEL-like equatorial domain"/>
    <property type="match status" value="1"/>
</dbReference>
<dbReference type="Gene3D" id="3.30.260.10">
    <property type="entry name" value="TCP-1-like chaperonin intermediate domain"/>
    <property type="match status" value="1"/>
</dbReference>
<dbReference type="HAMAP" id="MF_00600">
    <property type="entry name" value="CH60"/>
    <property type="match status" value="1"/>
</dbReference>
<dbReference type="InterPro" id="IPR018370">
    <property type="entry name" value="Chaperonin_Cpn60_CS"/>
</dbReference>
<dbReference type="InterPro" id="IPR001844">
    <property type="entry name" value="Cpn60/GroEL"/>
</dbReference>
<dbReference type="InterPro" id="IPR002423">
    <property type="entry name" value="Cpn60/GroEL/TCP-1"/>
</dbReference>
<dbReference type="InterPro" id="IPR027409">
    <property type="entry name" value="GroEL-like_apical_dom_sf"/>
</dbReference>
<dbReference type="InterPro" id="IPR027413">
    <property type="entry name" value="GROEL-like_equatorial_sf"/>
</dbReference>
<dbReference type="InterPro" id="IPR027410">
    <property type="entry name" value="TCP-1-like_intermed_sf"/>
</dbReference>
<dbReference type="NCBIfam" id="TIGR02348">
    <property type="entry name" value="GroEL"/>
    <property type="match status" value="1"/>
</dbReference>
<dbReference type="NCBIfam" id="NF000592">
    <property type="entry name" value="PRK00013.1"/>
    <property type="match status" value="1"/>
</dbReference>
<dbReference type="NCBIfam" id="NF009487">
    <property type="entry name" value="PRK12849.1"/>
    <property type="match status" value="1"/>
</dbReference>
<dbReference type="NCBIfam" id="NF009488">
    <property type="entry name" value="PRK12850.1"/>
    <property type="match status" value="1"/>
</dbReference>
<dbReference type="NCBIfam" id="NF009489">
    <property type="entry name" value="PRK12851.1"/>
    <property type="match status" value="1"/>
</dbReference>
<dbReference type="PANTHER" id="PTHR45633">
    <property type="entry name" value="60 KDA HEAT SHOCK PROTEIN, MITOCHONDRIAL"/>
    <property type="match status" value="1"/>
</dbReference>
<dbReference type="Pfam" id="PF00118">
    <property type="entry name" value="Cpn60_TCP1"/>
    <property type="match status" value="1"/>
</dbReference>
<dbReference type="PRINTS" id="PR00298">
    <property type="entry name" value="CHAPERONIN60"/>
</dbReference>
<dbReference type="SUPFAM" id="SSF52029">
    <property type="entry name" value="GroEL apical domain-like"/>
    <property type="match status" value="1"/>
</dbReference>
<dbReference type="SUPFAM" id="SSF48592">
    <property type="entry name" value="GroEL equatorial domain-like"/>
    <property type="match status" value="1"/>
</dbReference>
<dbReference type="SUPFAM" id="SSF54849">
    <property type="entry name" value="GroEL-intermediate domain like"/>
    <property type="match status" value="1"/>
</dbReference>
<dbReference type="PROSITE" id="PS00296">
    <property type="entry name" value="CHAPERONINS_CPN60"/>
    <property type="match status" value="1"/>
</dbReference>
<sequence>MPKLLYYAEDARGALQRGVDHLADTVKVTLGPKGRNVVLATSGNKVTITNDGVTIAREIELDERDENLGAQLVKEVATKTNDVAGDGTTTATVLAQAMVREGLRNVAAGANPLALKRGIDAAVTAISDRLLAQAREVATKDEIANVATISAQDPAVGAVIADAFDKVGKDGVITVEESNTMGLELEFVEGLQFDKGYISPYFITDPERMEAVLDNPYILLHEGKISNAMDFVPLLEKVVQAGRPLLVIAEDVEGDALATLVVNKIRGTFSSVAVKAPGFGDRRKAMLGDMAVLTGAQVVSPEVGLKLDEVGLEVLGTARRVRVTRDDTTIVEGGGSAEAIQDRIRQIRAQIDQTDSDWDREKLQERLAKLAGGVAVIRVGAATEVELKEKKHRLEDAVSATRAAIEEGIVAGGGSALLHASSALDSLELTGDEAVGASIVRKAAAEPLRWIAENAGFEGYVVCSRVRDLPVGHGFDAQTGEYTDLVARGIIDPVKVTRSALTNAASVVGLLLTTEAIVVDKPEEKPESAGHNHGHGHHHPH</sequence>
<gene>
    <name evidence="1" type="primary">groEL2</name>
    <name evidence="1" type="synonym">groL2</name>
    <name type="ordered locus">Acel_0363</name>
</gene>
<name>CH602_ACIC1</name>
<reference key="1">
    <citation type="journal article" date="2009" name="Genome Res.">
        <title>Complete genome of the cellulolytic thermophile Acidothermus cellulolyticus 11B provides insights into its ecophysiological and evolutionary adaptations.</title>
        <authorList>
            <person name="Barabote R.D."/>
            <person name="Xie G."/>
            <person name="Leu D.H."/>
            <person name="Normand P."/>
            <person name="Necsulea A."/>
            <person name="Daubin V."/>
            <person name="Medigue C."/>
            <person name="Adney W.S."/>
            <person name="Xu X.C."/>
            <person name="Lapidus A."/>
            <person name="Parales R.E."/>
            <person name="Detter C."/>
            <person name="Pujic P."/>
            <person name="Bruce D."/>
            <person name="Lavire C."/>
            <person name="Challacombe J.F."/>
            <person name="Brettin T.S."/>
            <person name="Berry A.M."/>
        </authorList>
    </citation>
    <scope>NUCLEOTIDE SEQUENCE [LARGE SCALE GENOMIC DNA]</scope>
    <source>
        <strain>ATCC 43068 / DSM 8971 / 11B</strain>
    </source>
</reference>
<feature type="chain" id="PRO_0000331962" description="Chaperonin GroEL 2">
    <location>
        <begin position="1"/>
        <end position="541"/>
    </location>
</feature>
<feature type="binding site" evidence="1">
    <location>
        <begin position="29"/>
        <end position="32"/>
    </location>
    <ligand>
        <name>ATP</name>
        <dbReference type="ChEBI" id="CHEBI:30616"/>
    </ligand>
</feature>
<feature type="binding site" evidence="1">
    <location>
        <begin position="86"/>
        <end position="90"/>
    </location>
    <ligand>
        <name>ATP</name>
        <dbReference type="ChEBI" id="CHEBI:30616"/>
    </ligand>
</feature>
<feature type="binding site" evidence="1">
    <location>
        <position position="413"/>
    </location>
    <ligand>
        <name>ATP</name>
        <dbReference type="ChEBI" id="CHEBI:30616"/>
    </ligand>
</feature>
<feature type="binding site" evidence="1">
    <location>
        <position position="492"/>
    </location>
    <ligand>
        <name>ATP</name>
        <dbReference type="ChEBI" id="CHEBI:30616"/>
    </ligand>
</feature>
<proteinExistence type="inferred from homology"/>
<evidence type="ECO:0000255" key="1">
    <source>
        <dbReference type="HAMAP-Rule" id="MF_00600"/>
    </source>
</evidence>
<accession>A0LRS7</accession>